<organism>
    <name type="scientific">Rickettsia rickettsii (strain Iowa)</name>
    <dbReference type="NCBI Taxonomy" id="452659"/>
    <lineage>
        <taxon>Bacteria</taxon>
        <taxon>Pseudomonadati</taxon>
        <taxon>Pseudomonadota</taxon>
        <taxon>Alphaproteobacteria</taxon>
        <taxon>Rickettsiales</taxon>
        <taxon>Rickettsiaceae</taxon>
        <taxon>Rickettsieae</taxon>
        <taxon>Rickettsia</taxon>
        <taxon>spotted fever group</taxon>
    </lineage>
</organism>
<name>RECO_RICRO</name>
<evidence type="ECO:0000255" key="1">
    <source>
        <dbReference type="HAMAP-Rule" id="MF_00201"/>
    </source>
</evidence>
<feature type="chain" id="PRO_1000193422" description="DNA repair protein RecO">
    <location>
        <begin position="1"/>
        <end position="237"/>
    </location>
</feature>
<reference key="1">
    <citation type="journal article" date="2008" name="Infect. Immun.">
        <title>Genomic comparison of virulent Rickettsia rickettsii Sheila Smith and avirulent Rickettsia rickettsii Iowa.</title>
        <authorList>
            <person name="Ellison D.W."/>
            <person name="Clark T.R."/>
            <person name="Sturdevant D.E."/>
            <person name="Virtaneva K."/>
            <person name="Porcella S.F."/>
            <person name="Hackstadt T."/>
        </authorList>
    </citation>
    <scope>NUCLEOTIDE SEQUENCE [LARGE SCALE GENOMIC DNA]</scope>
    <source>
        <strain>Iowa</strain>
    </source>
</reference>
<accession>B0BY57</accession>
<keyword id="KW-0227">DNA damage</keyword>
<keyword id="KW-0233">DNA recombination</keyword>
<keyword id="KW-0234">DNA repair</keyword>
<comment type="function">
    <text evidence="1">Involved in DNA repair and RecF pathway recombination.</text>
</comment>
<comment type="similarity">
    <text evidence="1">Belongs to the RecO family.</text>
</comment>
<protein>
    <recommendedName>
        <fullName evidence="1">DNA repair protein RecO</fullName>
    </recommendedName>
    <alternativeName>
        <fullName evidence="1">Recombination protein O</fullName>
    </alternativeName>
</protein>
<sequence length="237" mass="27883">MNIKDIGVIIAKKPLKENTFIITVFTKNHGLYSGVVKEFSKKSKFIYQEGNIIDFLWQARLHEHIGMAKCELIKSYTGYFITNKTKLYAFNSVISLIKELFHEREEHSKFFSFLINYLDNLSKHFCFRDYINFELALLAETGYKLDLTKCGVSHVTTDLIYVSPKSARALSYEVGKPYKDKLLMLPRFLLSDNSEITLEEKRQALALTNYFFNRYLFHNNRQVEARQTFIEYTLNNF</sequence>
<gene>
    <name evidence="1" type="primary">recO</name>
    <name type="ordered locus">RrIowa_0963</name>
</gene>
<proteinExistence type="inferred from homology"/>
<dbReference type="EMBL" id="CP000766">
    <property type="protein sequence ID" value="ABY72783.1"/>
    <property type="molecule type" value="Genomic_DNA"/>
</dbReference>
<dbReference type="RefSeq" id="WP_012150988.1">
    <property type="nucleotide sequence ID" value="NC_010263.3"/>
</dbReference>
<dbReference type="SMR" id="B0BY57"/>
<dbReference type="GeneID" id="79937522"/>
<dbReference type="KEGG" id="rrj:RrIowa_0963"/>
<dbReference type="eggNOG" id="COG1381">
    <property type="taxonomic scope" value="Bacteria"/>
</dbReference>
<dbReference type="HOGENOM" id="CLU_086029_0_0_5"/>
<dbReference type="Proteomes" id="UP000000796">
    <property type="component" value="Chromosome"/>
</dbReference>
<dbReference type="GO" id="GO:0043590">
    <property type="term" value="C:bacterial nucleoid"/>
    <property type="evidence" value="ECO:0007669"/>
    <property type="project" value="TreeGrafter"/>
</dbReference>
<dbReference type="GO" id="GO:0006310">
    <property type="term" value="P:DNA recombination"/>
    <property type="evidence" value="ECO:0007669"/>
    <property type="project" value="UniProtKB-UniRule"/>
</dbReference>
<dbReference type="GO" id="GO:0006302">
    <property type="term" value="P:double-strand break repair"/>
    <property type="evidence" value="ECO:0007669"/>
    <property type="project" value="TreeGrafter"/>
</dbReference>
<dbReference type="Gene3D" id="2.40.50.140">
    <property type="entry name" value="Nucleic acid-binding proteins"/>
    <property type="match status" value="1"/>
</dbReference>
<dbReference type="Gene3D" id="1.20.1440.120">
    <property type="entry name" value="Recombination protein O, C-terminal domain"/>
    <property type="match status" value="1"/>
</dbReference>
<dbReference type="HAMAP" id="MF_00201">
    <property type="entry name" value="RecO"/>
    <property type="match status" value="1"/>
</dbReference>
<dbReference type="InterPro" id="IPR037278">
    <property type="entry name" value="ARFGAP/RecO"/>
</dbReference>
<dbReference type="InterPro" id="IPR022572">
    <property type="entry name" value="DNA_rep/recomb_RecO_N"/>
</dbReference>
<dbReference type="InterPro" id="IPR012340">
    <property type="entry name" value="NA-bd_OB-fold"/>
</dbReference>
<dbReference type="InterPro" id="IPR003717">
    <property type="entry name" value="RecO"/>
</dbReference>
<dbReference type="InterPro" id="IPR042242">
    <property type="entry name" value="RecO_C"/>
</dbReference>
<dbReference type="NCBIfam" id="TIGR00613">
    <property type="entry name" value="reco"/>
    <property type="match status" value="1"/>
</dbReference>
<dbReference type="PANTHER" id="PTHR33991">
    <property type="entry name" value="DNA REPAIR PROTEIN RECO"/>
    <property type="match status" value="1"/>
</dbReference>
<dbReference type="PANTHER" id="PTHR33991:SF1">
    <property type="entry name" value="DNA REPAIR PROTEIN RECO"/>
    <property type="match status" value="1"/>
</dbReference>
<dbReference type="Pfam" id="PF02565">
    <property type="entry name" value="RecO_C"/>
    <property type="match status" value="1"/>
</dbReference>
<dbReference type="Pfam" id="PF11967">
    <property type="entry name" value="RecO_N"/>
    <property type="match status" value="1"/>
</dbReference>
<dbReference type="SUPFAM" id="SSF57863">
    <property type="entry name" value="ArfGap/RecO-like zinc finger"/>
    <property type="match status" value="1"/>
</dbReference>
<dbReference type="SUPFAM" id="SSF50249">
    <property type="entry name" value="Nucleic acid-binding proteins"/>
    <property type="match status" value="1"/>
</dbReference>